<accession>P81487</accession>
<organism>
    <name type="scientific">Phyllomedusa bicolor</name>
    <name type="common">Two-colored leaf frog</name>
    <name type="synonym">Rana bicolor</name>
    <dbReference type="NCBI Taxonomy" id="8393"/>
    <lineage>
        <taxon>Eukaryota</taxon>
        <taxon>Metazoa</taxon>
        <taxon>Chordata</taxon>
        <taxon>Craniata</taxon>
        <taxon>Vertebrata</taxon>
        <taxon>Euteleostomi</taxon>
        <taxon>Amphibia</taxon>
        <taxon>Batrachia</taxon>
        <taxon>Anura</taxon>
        <taxon>Neobatrachia</taxon>
        <taxon>Hyloidea</taxon>
        <taxon>Hylidae</taxon>
        <taxon>Phyllomedusinae</taxon>
        <taxon>Phyllomedusa</taxon>
    </lineage>
</organism>
<dbReference type="GO" id="GO:0005576">
    <property type="term" value="C:extracellular region"/>
    <property type="evidence" value="ECO:0007669"/>
    <property type="project" value="UniProtKB-SubCell"/>
</dbReference>
<dbReference type="GO" id="GO:0042742">
    <property type="term" value="P:defense response to bacterium"/>
    <property type="evidence" value="ECO:0007669"/>
    <property type="project" value="UniProtKB-KW"/>
</dbReference>
<dbReference type="InterPro" id="IPR022731">
    <property type="entry name" value="Dermaseptin_dom"/>
</dbReference>
<dbReference type="Pfam" id="PF12121">
    <property type="entry name" value="DD_K"/>
    <property type="match status" value="1"/>
</dbReference>
<feature type="peptide" id="PRO_0000043636" description="Dermaseptin-B5" evidence="1">
    <location>
        <begin position="1"/>
        <end position="26"/>
    </location>
</feature>
<feature type="modified residue" description="Valine amide" evidence="1">
    <location>
        <position position="26"/>
    </location>
</feature>
<keyword id="KW-0027">Amidation</keyword>
<keyword id="KW-0878">Amphibian defense peptide</keyword>
<keyword id="KW-0044">Antibiotic</keyword>
<keyword id="KW-0929">Antimicrobial</keyword>
<keyword id="KW-0903">Direct protein sequencing</keyword>
<keyword id="KW-0964">Secreted</keyword>
<protein>
    <recommendedName>
        <fullName evidence="2 3">Dermaseptin-B5</fullName>
        <shortName evidence="2 3">DRS-B5</shortName>
    </recommendedName>
    <alternativeName>
        <fullName>Dermaseptin-BV</fullName>
    </alternativeName>
</protein>
<sequence>GLWNKIKEAASKAAGKAALGFVNEMV</sequence>
<proteinExistence type="evidence at protein level"/>
<evidence type="ECO:0000269" key="1">
    <source>
    </source>
</evidence>
<evidence type="ECO:0000303" key="2">
    <source>
    </source>
</evidence>
<evidence type="ECO:0000303" key="3">
    <source>
    </source>
</evidence>
<evidence type="ECO:0000305" key="4"/>
<evidence type="ECO:0000305" key="5">
    <source>
    </source>
</evidence>
<name>DRS5_PHYBI</name>
<reference key="1">
    <citation type="journal article" date="1998" name="J. Biol. Chem.">
        <title>Structure, synthesis, and molecular cloning of dermaseptins B, a family of skin peptide antibiotics.</title>
        <authorList>
            <person name="Charpentier S."/>
            <person name="Amiche M."/>
            <person name="Mester J."/>
            <person name="Vouille V."/>
            <person name="Le Caer J.-P."/>
            <person name="Nicolas P."/>
            <person name="Delfour A."/>
        </authorList>
    </citation>
    <scope>PROTEIN SEQUENCE</scope>
    <scope>SUBCELLULAR LOCATION</scope>
    <scope>AMIDATION AT VAL-26</scope>
    <source>
        <tissue>Skin secretion</tissue>
    </source>
</reference>
<reference key="2">
    <citation type="journal article" date="2008" name="Peptides">
        <title>A consistent nomenclature of antimicrobial peptides isolated from frogs of the subfamily Phyllomedusinae.</title>
        <authorList>
            <person name="Amiche M."/>
            <person name="Ladram A."/>
            <person name="Nicolas P."/>
        </authorList>
    </citation>
    <scope>NOMENCLATURE</scope>
</reference>
<comment type="function">
    <text>Possesses a potent antimicrobial activity against Gram-positive and Gram-negative bacteria. Probably acts by disturbing membrane functions with its amphipathic structure.</text>
</comment>
<comment type="subcellular location">
    <subcellularLocation>
        <location evidence="1">Secreted</location>
    </subcellularLocation>
</comment>
<comment type="tissue specificity">
    <text evidence="5">Expressed by the skin glands.</text>
</comment>
<comment type="similarity">
    <text evidence="4">Belongs to the frog skin active peptide (FSAP) family. Dermaseptin subfamily.</text>
</comment>
<comment type="online information" name="The antimicrobial peptide database">
    <link uri="https://wangapd3.com/database/query_output.php?ID=0162"/>
</comment>